<organism>
    <name type="scientific">Anaeromyxobacter sp. (strain Fw109-5)</name>
    <dbReference type="NCBI Taxonomy" id="404589"/>
    <lineage>
        <taxon>Bacteria</taxon>
        <taxon>Pseudomonadati</taxon>
        <taxon>Myxococcota</taxon>
        <taxon>Myxococcia</taxon>
        <taxon>Myxococcales</taxon>
        <taxon>Cystobacterineae</taxon>
        <taxon>Anaeromyxobacteraceae</taxon>
        <taxon>Anaeromyxobacter</taxon>
    </lineage>
</organism>
<reference key="1">
    <citation type="journal article" date="2015" name="Genome Announc.">
        <title>Complete genome sequence of Anaeromyxobacter sp. Fw109-5, an anaerobic, metal-reducing bacterium isolated from a contaminated subsurface environment.</title>
        <authorList>
            <person name="Hwang C."/>
            <person name="Copeland A."/>
            <person name="Lucas S."/>
            <person name="Lapidus A."/>
            <person name="Barry K."/>
            <person name="Glavina Del Rio T."/>
            <person name="Dalin E."/>
            <person name="Tice H."/>
            <person name="Pitluck S."/>
            <person name="Sims D."/>
            <person name="Brettin T."/>
            <person name="Bruce D.C."/>
            <person name="Detter J.C."/>
            <person name="Han C.S."/>
            <person name="Schmutz J."/>
            <person name="Larimer F.W."/>
            <person name="Land M.L."/>
            <person name="Hauser L.J."/>
            <person name="Kyrpides N."/>
            <person name="Lykidis A."/>
            <person name="Richardson P."/>
            <person name="Belieav A."/>
            <person name="Sanford R.A."/>
            <person name="Loeffler F.E."/>
            <person name="Fields M.W."/>
        </authorList>
    </citation>
    <scope>NUCLEOTIDE SEQUENCE [LARGE SCALE GENOMIC DNA]</scope>
    <source>
        <strain>Fw109-5</strain>
    </source>
</reference>
<comment type="function">
    <text evidence="1">Specifically methylates the pseudouridine at position 1915 (m3Psi1915) in 23S rRNA.</text>
</comment>
<comment type="catalytic activity">
    <reaction evidence="1">
        <text>pseudouridine(1915) in 23S rRNA + S-adenosyl-L-methionine = N(3)-methylpseudouridine(1915) in 23S rRNA + S-adenosyl-L-homocysteine + H(+)</text>
        <dbReference type="Rhea" id="RHEA:42752"/>
        <dbReference type="Rhea" id="RHEA-COMP:10221"/>
        <dbReference type="Rhea" id="RHEA-COMP:10222"/>
        <dbReference type="ChEBI" id="CHEBI:15378"/>
        <dbReference type="ChEBI" id="CHEBI:57856"/>
        <dbReference type="ChEBI" id="CHEBI:59789"/>
        <dbReference type="ChEBI" id="CHEBI:65314"/>
        <dbReference type="ChEBI" id="CHEBI:74486"/>
        <dbReference type="EC" id="2.1.1.177"/>
    </reaction>
</comment>
<comment type="subunit">
    <text evidence="1">Homodimer.</text>
</comment>
<comment type="subcellular location">
    <subcellularLocation>
        <location evidence="1">Cytoplasm</location>
    </subcellularLocation>
</comment>
<comment type="similarity">
    <text evidence="1">Belongs to the RNA methyltransferase RlmH family.</text>
</comment>
<feature type="chain" id="PRO_1000061755" description="Ribosomal RNA large subunit methyltransferase H">
    <location>
        <begin position="1"/>
        <end position="153"/>
    </location>
</feature>
<feature type="binding site" evidence="1">
    <location>
        <position position="71"/>
    </location>
    <ligand>
        <name>S-adenosyl-L-methionine</name>
        <dbReference type="ChEBI" id="CHEBI:59789"/>
    </ligand>
</feature>
<feature type="binding site" evidence="1">
    <location>
        <position position="102"/>
    </location>
    <ligand>
        <name>S-adenosyl-L-methionine</name>
        <dbReference type="ChEBI" id="CHEBI:59789"/>
    </ligand>
</feature>
<feature type="binding site" evidence="1">
    <location>
        <begin position="121"/>
        <end position="126"/>
    </location>
    <ligand>
        <name>S-adenosyl-L-methionine</name>
        <dbReference type="ChEBI" id="CHEBI:59789"/>
    </ligand>
</feature>
<name>RLMH_ANADF</name>
<keyword id="KW-0963">Cytoplasm</keyword>
<keyword id="KW-0489">Methyltransferase</keyword>
<keyword id="KW-1185">Reference proteome</keyword>
<keyword id="KW-0698">rRNA processing</keyword>
<keyword id="KW-0949">S-adenosyl-L-methionine</keyword>
<keyword id="KW-0808">Transferase</keyword>
<dbReference type="EC" id="2.1.1.177" evidence="1"/>
<dbReference type="EMBL" id="CP000769">
    <property type="protein sequence ID" value="ABS24472.1"/>
    <property type="molecule type" value="Genomic_DNA"/>
</dbReference>
<dbReference type="RefSeq" id="WP_011984578.1">
    <property type="nucleotide sequence ID" value="NC_009675.1"/>
</dbReference>
<dbReference type="SMR" id="A7H6X6"/>
<dbReference type="STRING" id="404589.Anae109_0254"/>
<dbReference type="KEGG" id="afw:Anae109_0254"/>
<dbReference type="eggNOG" id="COG1576">
    <property type="taxonomic scope" value="Bacteria"/>
</dbReference>
<dbReference type="HOGENOM" id="CLU_100552_1_0_7"/>
<dbReference type="OrthoDB" id="9806643at2"/>
<dbReference type="Proteomes" id="UP000006382">
    <property type="component" value="Chromosome"/>
</dbReference>
<dbReference type="GO" id="GO:0005737">
    <property type="term" value="C:cytoplasm"/>
    <property type="evidence" value="ECO:0007669"/>
    <property type="project" value="UniProtKB-SubCell"/>
</dbReference>
<dbReference type="GO" id="GO:0070038">
    <property type="term" value="F:rRNA (pseudouridine-N3-)-methyltransferase activity"/>
    <property type="evidence" value="ECO:0007669"/>
    <property type="project" value="UniProtKB-UniRule"/>
</dbReference>
<dbReference type="CDD" id="cd18081">
    <property type="entry name" value="RlmH-like"/>
    <property type="match status" value="1"/>
</dbReference>
<dbReference type="Gene3D" id="3.40.1280.10">
    <property type="match status" value="1"/>
</dbReference>
<dbReference type="HAMAP" id="MF_00658">
    <property type="entry name" value="23SrRNA_methyltr_H"/>
    <property type="match status" value="1"/>
</dbReference>
<dbReference type="InterPro" id="IPR029028">
    <property type="entry name" value="Alpha/beta_knot_MTases"/>
</dbReference>
<dbReference type="InterPro" id="IPR003742">
    <property type="entry name" value="RlmH-like"/>
</dbReference>
<dbReference type="InterPro" id="IPR029026">
    <property type="entry name" value="tRNA_m1G_MTases_N"/>
</dbReference>
<dbReference type="NCBIfam" id="NF000986">
    <property type="entry name" value="PRK00103.1-4"/>
    <property type="match status" value="1"/>
</dbReference>
<dbReference type="PANTHER" id="PTHR33603">
    <property type="entry name" value="METHYLTRANSFERASE"/>
    <property type="match status" value="1"/>
</dbReference>
<dbReference type="PANTHER" id="PTHR33603:SF1">
    <property type="entry name" value="RIBOSOMAL RNA LARGE SUBUNIT METHYLTRANSFERASE H"/>
    <property type="match status" value="1"/>
</dbReference>
<dbReference type="Pfam" id="PF02590">
    <property type="entry name" value="SPOUT_MTase"/>
    <property type="match status" value="1"/>
</dbReference>
<dbReference type="PIRSF" id="PIRSF004505">
    <property type="entry name" value="MT_bac"/>
    <property type="match status" value="1"/>
</dbReference>
<dbReference type="SUPFAM" id="SSF75217">
    <property type="entry name" value="alpha/beta knot"/>
    <property type="match status" value="1"/>
</dbReference>
<protein>
    <recommendedName>
        <fullName evidence="1">Ribosomal RNA large subunit methyltransferase H</fullName>
        <ecNumber evidence="1">2.1.1.177</ecNumber>
    </recommendedName>
    <alternativeName>
        <fullName evidence="1">23S rRNA (pseudouridine1915-N3)-methyltransferase</fullName>
    </alternativeName>
    <alternativeName>
        <fullName evidence="1">23S rRNA m3Psi1915 methyltransferase</fullName>
    </alternativeName>
    <alternativeName>
        <fullName evidence="1">rRNA (pseudouridine-N3-)-methyltransferase RlmH</fullName>
    </alternativeName>
</protein>
<sequence length="153" mass="17194">MRLRVVAVGRDRSGLYAPAIEEYAKRLGRYVKFELVEVPEARKHAGTAQARDEEAEALLAKLGPRERVIALDERGAEWTSVAFAERVRRWTEGGRDVALVIGGSDGLSRAVLDRAEETLALSRMTLAHRLARLVLVEQLYRAMTILRGEPYHK</sequence>
<evidence type="ECO:0000255" key="1">
    <source>
        <dbReference type="HAMAP-Rule" id="MF_00658"/>
    </source>
</evidence>
<proteinExistence type="inferred from homology"/>
<gene>
    <name evidence="1" type="primary">rlmH</name>
    <name type="ordered locus">Anae109_0254</name>
</gene>
<accession>A7H6X6</accession>